<name>UXAC_FLAJ1</name>
<organism>
    <name type="scientific">Flavobacterium johnsoniae (strain ATCC 17061 / DSM 2064 / JCM 8514 / BCRC 14874 / CCUG 350202 / NBRC 14942 / NCIMB 11054 / UW101)</name>
    <name type="common">Cytophaga johnsonae</name>
    <dbReference type="NCBI Taxonomy" id="376686"/>
    <lineage>
        <taxon>Bacteria</taxon>
        <taxon>Pseudomonadati</taxon>
        <taxon>Bacteroidota</taxon>
        <taxon>Flavobacteriia</taxon>
        <taxon>Flavobacteriales</taxon>
        <taxon>Flavobacteriaceae</taxon>
        <taxon>Flavobacterium</taxon>
    </lineage>
</organism>
<accession>A5FC03</accession>
<proteinExistence type="inferred from homology"/>
<evidence type="ECO:0000255" key="1">
    <source>
        <dbReference type="HAMAP-Rule" id="MF_00675"/>
    </source>
</evidence>
<reference key="1">
    <citation type="journal article" date="2009" name="Appl. Environ. Microbiol.">
        <title>Novel features of the polysaccharide-digesting gliding bacterium Flavobacterium johnsoniae as revealed by genome sequence analysis.</title>
        <authorList>
            <person name="McBride M.J."/>
            <person name="Xie G."/>
            <person name="Martens E.C."/>
            <person name="Lapidus A."/>
            <person name="Henrissat B."/>
            <person name="Rhodes R.G."/>
            <person name="Goltsman E."/>
            <person name="Wang W."/>
            <person name="Xu J."/>
            <person name="Hunnicutt D.W."/>
            <person name="Staroscik A.M."/>
            <person name="Hoover T.R."/>
            <person name="Cheng Y.Q."/>
            <person name="Stein J.L."/>
        </authorList>
    </citation>
    <scope>NUCLEOTIDE SEQUENCE [LARGE SCALE GENOMIC DNA]</scope>
    <source>
        <strain>ATCC 17061 / DSM 2064 / JCM 8514 / BCRC 14874 / CCUG 350202 / NBRC 14942 / NCIMB 11054 / UW101</strain>
    </source>
</reference>
<sequence>MSANTFIHDNFLLENKYAEELYHNYSKNQPIIDYHNHLNPQFIAEDKIFDNITNVWINGDHYKWRAMRTLGIDEQFVTGNGSDKDKFLNWAKTVPYTMRNPLYHWTHLELARYFDIYDLLNEKSAEKIYTETTEKINSQAYSTQNLLKKVNAELVCTTEDPIDSLEFHKKFANNSTGIKMSTAFRPDKAILIANDGYNAYLDTLGDVSGVAINTFADLQAALRNRIEFFNANGCKLSDHGLDQIYFEDFTESEISSIFKKKRENRIITPEEALKFQSAVLIFLSETYHEFGWVQQFHLGALRNNNARMHRILGPDTGWDSIGDYPQAQKLSSFLNALDSKDKLTKTIIYNLNPADNEVMATMIGNFNDGSVRGKVQFGSGWWFLDQKDGMTKQLNALSNMGLISCFVGMLTDSRSFLSFPRHEYFRRILCNLLGDEIKRGELPNDMEWIGKLVADISYNNAKEYFKF</sequence>
<dbReference type="EC" id="5.3.1.12" evidence="1"/>
<dbReference type="EMBL" id="CP000685">
    <property type="protein sequence ID" value="ABQ07270.1"/>
    <property type="molecule type" value="Genomic_DNA"/>
</dbReference>
<dbReference type="RefSeq" id="WP_012026236.1">
    <property type="nucleotide sequence ID" value="NC_009441.1"/>
</dbReference>
<dbReference type="SMR" id="A5FC03"/>
<dbReference type="STRING" id="376686.Fjoh_4262"/>
<dbReference type="KEGG" id="fjo:Fjoh_4262"/>
<dbReference type="eggNOG" id="COG1904">
    <property type="taxonomic scope" value="Bacteria"/>
</dbReference>
<dbReference type="HOGENOM" id="CLU_044465_1_0_10"/>
<dbReference type="OrthoDB" id="9766564at2"/>
<dbReference type="UniPathway" id="UPA00246"/>
<dbReference type="Proteomes" id="UP000006694">
    <property type="component" value="Chromosome"/>
</dbReference>
<dbReference type="GO" id="GO:0008880">
    <property type="term" value="F:glucuronate isomerase activity"/>
    <property type="evidence" value="ECO:0007669"/>
    <property type="project" value="UniProtKB-UniRule"/>
</dbReference>
<dbReference type="GO" id="GO:0019698">
    <property type="term" value="P:D-galacturonate catabolic process"/>
    <property type="evidence" value="ECO:0007669"/>
    <property type="project" value="TreeGrafter"/>
</dbReference>
<dbReference type="GO" id="GO:0042840">
    <property type="term" value="P:D-glucuronate catabolic process"/>
    <property type="evidence" value="ECO:0007669"/>
    <property type="project" value="TreeGrafter"/>
</dbReference>
<dbReference type="Gene3D" id="3.20.20.140">
    <property type="entry name" value="Metal-dependent hydrolases"/>
    <property type="match status" value="1"/>
</dbReference>
<dbReference type="Gene3D" id="1.10.2020.10">
    <property type="entry name" value="uronate isomerase, domain 2, chain A"/>
    <property type="match status" value="1"/>
</dbReference>
<dbReference type="HAMAP" id="MF_00675">
    <property type="entry name" value="UxaC"/>
    <property type="match status" value="1"/>
</dbReference>
<dbReference type="InterPro" id="IPR032466">
    <property type="entry name" value="Metal_Hydrolase"/>
</dbReference>
<dbReference type="InterPro" id="IPR003766">
    <property type="entry name" value="Uronate_isomerase"/>
</dbReference>
<dbReference type="NCBIfam" id="NF002794">
    <property type="entry name" value="PRK02925.1"/>
    <property type="match status" value="1"/>
</dbReference>
<dbReference type="PANTHER" id="PTHR30068">
    <property type="entry name" value="URONATE ISOMERASE"/>
    <property type="match status" value="1"/>
</dbReference>
<dbReference type="PANTHER" id="PTHR30068:SF4">
    <property type="entry name" value="URONATE ISOMERASE"/>
    <property type="match status" value="1"/>
</dbReference>
<dbReference type="Pfam" id="PF02614">
    <property type="entry name" value="UxaC"/>
    <property type="match status" value="1"/>
</dbReference>
<dbReference type="SUPFAM" id="SSF51556">
    <property type="entry name" value="Metallo-dependent hydrolases"/>
    <property type="match status" value="1"/>
</dbReference>
<comment type="catalytic activity">
    <reaction evidence="1">
        <text>D-glucuronate = D-fructuronate</text>
        <dbReference type="Rhea" id="RHEA:13049"/>
        <dbReference type="ChEBI" id="CHEBI:58720"/>
        <dbReference type="ChEBI" id="CHEBI:59863"/>
        <dbReference type="EC" id="5.3.1.12"/>
    </reaction>
</comment>
<comment type="catalytic activity">
    <reaction evidence="1">
        <text>aldehydo-D-galacturonate = keto-D-tagaturonate</text>
        <dbReference type="Rhea" id="RHEA:27702"/>
        <dbReference type="ChEBI" id="CHEBI:12952"/>
        <dbReference type="ChEBI" id="CHEBI:17886"/>
        <dbReference type="EC" id="5.3.1.12"/>
    </reaction>
</comment>
<comment type="pathway">
    <text evidence="1">Carbohydrate metabolism; pentose and glucuronate interconversion.</text>
</comment>
<comment type="similarity">
    <text evidence="1">Belongs to the metallo-dependent hydrolases superfamily. Uronate isomerase family.</text>
</comment>
<gene>
    <name evidence="1" type="primary">uxaC</name>
    <name type="ordered locus">Fjoh_4262</name>
</gene>
<protein>
    <recommendedName>
        <fullName evidence="1">Uronate isomerase</fullName>
        <ecNumber evidence="1">5.3.1.12</ecNumber>
    </recommendedName>
    <alternativeName>
        <fullName evidence="1">Glucuronate isomerase</fullName>
    </alternativeName>
    <alternativeName>
        <fullName evidence="1">Uronic isomerase</fullName>
    </alternativeName>
</protein>
<keyword id="KW-0413">Isomerase</keyword>
<feature type="chain" id="PRO_1000082962" description="Uronate isomerase">
    <location>
        <begin position="1"/>
        <end position="467"/>
    </location>
</feature>